<feature type="chain" id="PRO_1000116917" description="Deoxyguanosinetriphosphate triphosphohydrolase">
    <location>
        <begin position="1"/>
        <end position="505"/>
    </location>
</feature>
<feature type="domain" description="HD" evidence="2">
    <location>
        <begin position="66"/>
        <end position="273"/>
    </location>
</feature>
<evidence type="ECO:0000255" key="1">
    <source>
        <dbReference type="HAMAP-Rule" id="MF_00030"/>
    </source>
</evidence>
<evidence type="ECO:0000255" key="2">
    <source>
        <dbReference type="PROSITE-ProRule" id="PRU01175"/>
    </source>
</evidence>
<comment type="function">
    <text evidence="1">dGTPase preferentially hydrolyzes dGTP over the other canonical NTPs.</text>
</comment>
<comment type="catalytic activity">
    <reaction evidence="1">
        <text>dGTP + H2O = 2'-deoxyguanosine + triphosphate + H(+)</text>
        <dbReference type="Rhea" id="RHEA:15193"/>
        <dbReference type="ChEBI" id="CHEBI:15377"/>
        <dbReference type="ChEBI" id="CHEBI:15378"/>
        <dbReference type="ChEBI" id="CHEBI:17172"/>
        <dbReference type="ChEBI" id="CHEBI:18036"/>
        <dbReference type="ChEBI" id="CHEBI:61429"/>
        <dbReference type="EC" id="3.1.5.1"/>
    </reaction>
</comment>
<comment type="cofactor">
    <cofactor evidence="1">
        <name>Mg(2+)</name>
        <dbReference type="ChEBI" id="CHEBI:18420"/>
    </cofactor>
</comment>
<comment type="subunit">
    <text evidence="1">Homotetramer.</text>
</comment>
<comment type="similarity">
    <text evidence="1">Belongs to the dGTPase family. Type 1 subfamily.</text>
</comment>
<accession>B7MP22</accession>
<proteinExistence type="inferred from homology"/>
<sequence length="505" mass="59374">MAQIDFRKKINWHRRYRSPQGVKTEHEILRIFESDRGRIINSPAIRRLQQKTQVFPLERNAAVRTRLTHSMEVQQVGRYIAKEILSRLKELKLLEAYGLDELTGPFESIVEMSCLMHDIGNPPFGHFGEAAINDWFRQRLYPEDAESQPLTDDRCSVAALRLRDGEEPLNALRRKIRQDLCHFEGNAQGIRLVHTLMRMNLTWAQVGGILKYTRPAWWRGETPETHHYLMKKPGYYLSEEAYIARLRKELNLALYSRFPLTWIMEAADDISYCVADLEDAVEKRIFTVEQLYHHLHEAWGQHEKGSLFSLVVENAWEKSRSNSLSRSTEDQFFMYLRVNTLNKLVPYAAQRFIDNLPAIFAGTFNHALLEDASECSDLLKLYKNVAVKHVFSHPDVEQLELQGYRVISGLLEIYRPLLNLPLSDFTELVEKERVKRFPIETRLFHKLSTRHRLAYVEAVSKLPSDSPEFPLWEYYYRCRLLQDYISGMTDLYAWDEYRRLMAVEQ</sequence>
<protein>
    <recommendedName>
        <fullName evidence="1">Deoxyguanosinetriphosphate triphosphohydrolase</fullName>
        <shortName evidence="1">dGTP triphosphohydrolase</shortName>
        <shortName evidence="1">dGTPase</shortName>
        <ecNumber evidence="1">3.1.5.1</ecNumber>
    </recommendedName>
</protein>
<gene>
    <name evidence="1" type="primary">dgt</name>
    <name type="ordered locus">ECED1_0167</name>
</gene>
<dbReference type="EC" id="3.1.5.1" evidence="1"/>
<dbReference type="EMBL" id="CU928162">
    <property type="protein sequence ID" value="CAR06387.1"/>
    <property type="molecule type" value="Genomic_DNA"/>
</dbReference>
<dbReference type="RefSeq" id="WP_000057086.1">
    <property type="nucleotide sequence ID" value="NC_011745.1"/>
</dbReference>
<dbReference type="SMR" id="B7MP22"/>
<dbReference type="KEGG" id="ecq:ECED1_0167"/>
<dbReference type="HOGENOM" id="CLU_028163_2_1_6"/>
<dbReference type="Proteomes" id="UP000000748">
    <property type="component" value="Chromosome"/>
</dbReference>
<dbReference type="GO" id="GO:0008832">
    <property type="term" value="F:dGTPase activity"/>
    <property type="evidence" value="ECO:0007669"/>
    <property type="project" value="UniProtKB-UniRule"/>
</dbReference>
<dbReference type="GO" id="GO:0000287">
    <property type="term" value="F:magnesium ion binding"/>
    <property type="evidence" value="ECO:0007669"/>
    <property type="project" value="UniProtKB-UniRule"/>
</dbReference>
<dbReference type="GO" id="GO:0006203">
    <property type="term" value="P:dGTP catabolic process"/>
    <property type="evidence" value="ECO:0007669"/>
    <property type="project" value="InterPro"/>
</dbReference>
<dbReference type="CDD" id="cd00077">
    <property type="entry name" value="HDc"/>
    <property type="match status" value="1"/>
</dbReference>
<dbReference type="FunFam" id="1.10.3210.10:FF:000009">
    <property type="entry name" value="Deoxyguanosinetriphosphate triphosphohydrolase"/>
    <property type="match status" value="1"/>
</dbReference>
<dbReference type="FunFam" id="1.10.3210.10:FF:000010">
    <property type="entry name" value="Deoxyguanosinetriphosphate triphosphohydrolase"/>
    <property type="match status" value="1"/>
</dbReference>
<dbReference type="FunFam" id="1.10.3410.10:FF:000001">
    <property type="entry name" value="Deoxyguanosinetriphosphate triphosphohydrolase"/>
    <property type="match status" value="1"/>
</dbReference>
<dbReference type="Gene3D" id="1.10.3210.10">
    <property type="entry name" value="Hypothetical protein af1432"/>
    <property type="match status" value="2"/>
</dbReference>
<dbReference type="Gene3D" id="1.10.3410.10">
    <property type="entry name" value="putative deoxyguanosinetriphosphate triphosphohydrolase like domain"/>
    <property type="match status" value="1"/>
</dbReference>
<dbReference type="HAMAP" id="MF_00030">
    <property type="entry name" value="dGTPase_type1"/>
    <property type="match status" value="1"/>
</dbReference>
<dbReference type="InterPro" id="IPR023293">
    <property type="entry name" value="dGTP_triP_hydro_central_sf"/>
</dbReference>
<dbReference type="InterPro" id="IPR006261">
    <property type="entry name" value="dGTPase"/>
</dbReference>
<dbReference type="InterPro" id="IPR050135">
    <property type="entry name" value="dGTPase-like"/>
</dbReference>
<dbReference type="InterPro" id="IPR020779">
    <property type="entry name" value="dNTPase_1"/>
</dbReference>
<dbReference type="InterPro" id="IPR003607">
    <property type="entry name" value="HD/PDEase_dom"/>
</dbReference>
<dbReference type="InterPro" id="IPR006674">
    <property type="entry name" value="HD_domain"/>
</dbReference>
<dbReference type="NCBIfam" id="TIGR01353">
    <property type="entry name" value="dGTP_triPase"/>
    <property type="match status" value="1"/>
</dbReference>
<dbReference type="NCBIfam" id="NF003429">
    <property type="entry name" value="PRK04926.1"/>
    <property type="match status" value="1"/>
</dbReference>
<dbReference type="PANTHER" id="PTHR11373:SF32">
    <property type="entry name" value="DEOXYGUANOSINETRIPHOSPHATE TRIPHOSPHOHYDROLASE"/>
    <property type="match status" value="1"/>
</dbReference>
<dbReference type="PANTHER" id="PTHR11373">
    <property type="entry name" value="DEOXYNUCLEOSIDE TRIPHOSPHATE TRIPHOSPHOHYDROLASE"/>
    <property type="match status" value="1"/>
</dbReference>
<dbReference type="Pfam" id="PF01966">
    <property type="entry name" value="HD"/>
    <property type="match status" value="1"/>
</dbReference>
<dbReference type="SMART" id="SM00471">
    <property type="entry name" value="HDc"/>
    <property type="match status" value="1"/>
</dbReference>
<dbReference type="SUPFAM" id="SSF109604">
    <property type="entry name" value="HD-domain/PDEase-like"/>
    <property type="match status" value="1"/>
</dbReference>
<dbReference type="PROSITE" id="PS51831">
    <property type="entry name" value="HD"/>
    <property type="match status" value="1"/>
</dbReference>
<keyword id="KW-0378">Hydrolase</keyword>
<keyword id="KW-0460">Magnesium</keyword>
<name>DGTP_ECO81</name>
<reference key="1">
    <citation type="journal article" date="2009" name="PLoS Genet.">
        <title>Organised genome dynamics in the Escherichia coli species results in highly diverse adaptive paths.</title>
        <authorList>
            <person name="Touchon M."/>
            <person name="Hoede C."/>
            <person name="Tenaillon O."/>
            <person name="Barbe V."/>
            <person name="Baeriswyl S."/>
            <person name="Bidet P."/>
            <person name="Bingen E."/>
            <person name="Bonacorsi S."/>
            <person name="Bouchier C."/>
            <person name="Bouvet O."/>
            <person name="Calteau A."/>
            <person name="Chiapello H."/>
            <person name="Clermont O."/>
            <person name="Cruveiller S."/>
            <person name="Danchin A."/>
            <person name="Diard M."/>
            <person name="Dossat C."/>
            <person name="Karoui M.E."/>
            <person name="Frapy E."/>
            <person name="Garry L."/>
            <person name="Ghigo J.M."/>
            <person name="Gilles A.M."/>
            <person name="Johnson J."/>
            <person name="Le Bouguenec C."/>
            <person name="Lescat M."/>
            <person name="Mangenot S."/>
            <person name="Martinez-Jehanne V."/>
            <person name="Matic I."/>
            <person name="Nassif X."/>
            <person name="Oztas S."/>
            <person name="Petit M.A."/>
            <person name="Pichon C."/>
            <person name="Rouy Z."/>
            <person name="Ruf C.S."/>
            <person name="Schneider D."/>
            <person name="Tourret J."/>
            <person name="Vacherie B."/>
            <person name="Vallenet D."/>
            <person name="Medigue C."/>
            <person name="Rocha E.P.C."/>
            <person name="Denamur E."/>
        </authorList>
    </citation>
    <scope>NUCLEOTIDE SEQUENCE [LARGE SCALE GENOMIC DNA]</scope>
    <source>
        <strain>ED1a</strain>
    </source>
</reference>
<organism>
    <name type="scientific">Escherichia coli O81 (strain ED1a)</name>
    <dbReference type="NCBI Taxonomy" id="585397"/>
    <lineage>
        <taxon>Bacteria</taxon>
        <taxon>Pseudomonadati</taxon>
        <taxon>Pseudomonadota</taxon>
        <taxon>Gammaproteobacteria</taxon>
        <taxon>Enterobacterales</taxon>
        <taxon>Enterobacteriaceae</taxon>
        <taxon>Escherichia</taxon>
    </lineage>
</organism>